<proteinExistence type="inferred from homology"/>
<organism>
    <name type="scientific">Strawberry mild yellow edge-associated virus</name>
    <name type="common">SMYEaV</name>
    <dbReference type="NCBI Taxonomy" id="12187"/>
    <lineage>
        <taxon>Viruses</taxon>
        <taxon>Riboviria</taxon>
        <taxon>Orthornavirae</taxon>
        <taxon>Kitrinoviricota</taxon>
        <taxon>Alsuviricetes</taxon>
        <taxon>Tymovirales</taxon>
        <taxon>Alphaflexiviridae</taxon>
        <taxon>Potexvirus</taxon>
    </lineage>
</organism>
<comment type="function">
    <text>Required for genome encapsidation. Forms ribonucleoprotein complexes along with TGB1 helicase and viral RNA.</text>
</comment>
<comment type="subcellular location">
    <subcellularLocation>
        <location evidence="2">Virion</location>
    </subcellularLocation>
</comment>
<comment type="similarity">
    <text evidence="2">Belongs to the potexvirus capsid protein family.</text>
</comment>
<comment type="caution">
    <text evidence="2">It is uncertain whether Met-1 or Met-20 is the initiator.</text>
</comment>
<comment type="sequence caution" evidence="2">
    <conflict type="erroneous initiation">
        <sequence resource="EMBL-CDS" id="BAA02079"/>
    </conflict>
</comment>
<protein>
    <recommendedName>
        <fullName>Coat protein</fullName>
    </recommendedName>
    <alternativeName>
        <fullName>Capsid protein</fullName>
        <shortName>CP</shortName>
    </alternativeName>
</protein>
<organismHost>
    <name type="scientific">Chenopodium quinoa</name>
    <name type="common">Quinoa</name>
    <dbReference type="NCBI Taxonomy" id="63459"/>
</organismHost>
<organismHost>
    <name type="scientific">Fragaria vesca</name>
    <name type="common">Woodland strawberry</name>
    <name type="synonym">Potentilla vesca</name>
    <dbReference type="NCBI Taxonomy" id="57918"/>
</organismHost>
<organismHost>
    <name type="scientific">Rubus rosifolius</name>
    <dbReference type="NCBI Taxonomy" id="59498"/>
</organismHost>
<reference key="1">
    <citation type="journal article" date="1992" name="J. Gen. Virol.">
        <title>The nucleotide sequence and genome organization of strawberry mild yellow edge-associated potexvirus.</title>
        <authorList>
            <person name="Jelkmann W."/>
            <person name="Maiss E."/>
            <person name="Martin R.R."/>
        </authorList>
    </citation>
    <scope>NUCLEOTIDE SEQUENCE [GENOMIC RNA]</scope>
    <source>
        <strain>MY-18</strain>
    </source>
</reference>
<reference key="2">
    <citation type="journal article" date="1990" name="J. Gen. Virol.">
        <title>A new potexvirus associated with strawberry mild yellow edge disease.</title>
        <authorList>
            <person name="Jelkmann W."/>
            <person name="Martin R.R."/>
            <person name="Lesemann D.E."/>
            <person name="Vetten J.H."/>
            <person name="Skelton F."/>
        </authorList>
    </citation>
    <scope>NUCLEOTIDE SEQUENCE [GENOMIC RNA]</scope>
    <source>
        <strain>MY-18</strain>
    </source>
</reference>
<reference key="3">
    <citation type="journal article" date="2005" name="Mol. Plant Microbe Interact.">
        <title>A new cell-to-cell transport model for Potexviruses.</title>
        <authorList>
            <person name="Verchot-Lubicz J."/>
        </authorList>
    </citation>
    <scope>REVIEW</scope>
</reference>
<accession>P28899</accession>
<accession>Q88467</accession>
<evidence type="ECO:0000256" key="1">
    <source>
        <dbReference type="SAM" id="MobiDB-lite"/>
    </source>
</evidence>
<evidence type="ECO:0000305" key="2"/>
<sequence length="242" mass="25743">MGDQPRPPVPPAPGSNPLPMGSTPPVLPGRTPNPNANVANQVGDPFRVLTPEELAAPISAASNKVATREQILGIVADLNALGFVGDPALGLFDLAFHCYDIGSSPSAQPVGPSPFGCSRMQVAAVVRNHCTLRQLCMFYAPSVWNKAVRDNRPPGNWSNLQFTPETKFAAFDFFDGVLNPASQEVPLWRQPTPQEIYASATHKDVATYRAASKAHDRISNSTLLTKGASRSTPPALLPGPDA</sequence>
<feature type="chain" id="PRO_0000222631" description="Coat protein">
    <location>
        <begin position="1"/>
        <end position="242"/>
    </location>
</feature>
<feature type="region of interest" description="Disordered" evidence="1">
    <location>
        <begin position="1"/>
        <end position="41"/>
    </location>
</feature>
<feature type="region of interest" description="Disordered" evidence="1">
    <location>
        <begin position="219"/>
        <end position="242"/>
    </location>
</feature>
<feature type="compositionally biased region" description="Pro residues" evidence="1">
    <location>
        <begin position="1"/>
        <end position="16"/>
    </location>
</feature>
<feature type="compositionally biased region" description="Polar residues" evidence="1">
    <location>
        <begin position="219"/>
        <end position="232"/>
    </location>
</feature>
<name>CAPSD_SMYEA</name>
<dbReference type="EMBL" id="D12517">
    <property type="protein sequence ID" value="BAA02086.1"/>
    <property type="molecule type" value="Genomic_RNA"/>
</dbReference>
<dbReference type="EMBL" id="D12515">
    <property type="protein sequence ID" value="BAA02078.1"/>
    <property type="molecule type" value="Genomic_RNA"/>
</dbReference>
<dbReference type="EMBL" id="D12515">
    <property type="protein sequence ID" value="BAA02079.1"/>
    <property type="status" value="ALT_INIT"/>
    <property type="molecule type" value="Genomic_RNA"/>
</dbReference>
<dbReference type="PIR" id="JQ1430">
    <property type="entry name" value="VCWGSM"/>
</dbReference>
<dbReference type="RefSeq" id="NP_620646.1">
    <property type="nucleotide sequence ID" value="NC_003794.1"/>
</dbReference>
<dbReference type="SMR" id="P28899"/>
<dbReference type="GeneID" id="944375"/>
<dbReference type="KEGG" id="vg:944375"/>
<dbReference type="OrthoDB" id="15901at10239"/>
<dbReference type="Proteomes" id="UP000007225">
    <property type="component" value="Genome"/>
</dbReference>
<dbReference type="GO" id="GO:0019029">
    <property type="term" value="C:helical viral capsid"/>
    <property type="evidence" value="ECO:0007669"/>
    <property type="project" value="UniProtKB-KW"/>
</dbReference>
<dbReference type="GO" id="GO:1990904">
    <property type="term" value="C:ribonucleoprotein complex"/>
    <property type="evidence" value="ECO:0007669"/>
    <property type="project" value="UniProtKB-KW"/>
</dbReference>
<dbReference type="GO" id="GO:0005198">
    <property type="term" value="F:structural molecule activity"/>
    <property type="evidence" value="ECO:0007669"/>
    <property type="project" value="InterPro"/>
</dbReference>
<dbReference type="InterPro" id="IPR000052">
    <property type="entry name" value="Pltvir_coat"/>
</dbReference>
<dbReference type="Pfam" id="PF00286">
    <property type="entry name" value="Flexi_CP"/>
    <property type="match status" value="1"/>
</dbReference>
<dbReference type="PRINTS" id="PR00232">
    <property type="entry name" value="POTXCARLCOAT"/>
</dbReference>
<dbReference type="PROSITE" id="PS00418">
    <property type="entry name" value="POTEX_CARLAVIRUS_COAT"/>
    <property type="match status" value="1"/>
</dbReference>
<keyword id="KW-0167">Capsid protein</keyword>
<keyword id="KW-1139">Helical capsid protein</keyword>
<keyword id="KW-1185">Reference proteome</keyword>
<keyword id="KW-0687">Ribonucleoprotein</keyword>
<keyword id="KW-0946">Virion</keyword>